<gene>
    <name evidence="1" type="primary">matK</name>
</gene>
<protein>
    <recommendedName>
        <fullName evidence="1">Maturase K</fullName>
    </recommendedName>
    <alternativeName>
        <fullName evidence="1">Intron maturase</fullName>
    </alternativeName>
</protein>
<organism>
    <name type="scientific">Nicotiana plumbaginifolia</name>
    <name type="common">Leadwort-leaved tobacco</name>
    <name type="synonym">Tex-Mex tobacco</name>
    <dbReference type="NCBI Taxonomy" id="4092"/>
    <lineage>
        <taxon>Eukaryota</taxon>
        <taxon>Viridiplantae</taxon>
        <taxon>Streptophyta</taxon>
        <taxon>Embryophyta</taxon>
        <taxon>Tracheophyta</taxon>
        <taxon>Spermatophyta</taxon>
        <taxon>Magnoliopsida</taxon>
        <taxon>eudicotyledons</taxon>
        <taxon>Gunneridae</taxon>
        <taxon>Pentapetalae</taxon>
        <taxon>asterids</taxon>
        <taxon>lamiids</taxon>
        <taxon>Solanales</taxon>
        <taxon>Solanaceae</taxon>
        <taxon>Nicotianoideae</taxon>
        <taxon>Nicotianeae</taxon>
        <taxon>Nicotiana</taxon>
    </lineage>
</organism>
<name>MATK_NICPL</name>
<geneLocation type="chloroplast"/>
<accession>Q94Q76</accession>
<reference key="1">
    <citation type="journal article" date="2000" name="Plant Biol.">
        <title>Molecular phylogeny of Nicotiana (Solanaceae) based on the nucleotide sequence of the matK gene.</title>
        <authorList>
            <person name="Aoki S."/>
            <person name="Ito M."/>
        </authorList>
    </citation>
    <scope>NUCLEOTIDE SEQUENCE [GENOMIC DNA]</scope>
</reference>
<keyword id="KW-0150">Chloroplast</keyword>
<keyword id="KW-0507">mRNA processing</keyword>
<keyword id="KW-0934">Plastid</keyword>
<keyword id="KW-0694">RNA-binding</keyword>
<keyword id="KW-0819">tRNA processing</keyword>
<feature type="chain" id="PRO_0000143545" description="Maturase K">
    <location>
        <begin position="1"/>
        <end position="509"/>
    </location>
</feature>
<evidence type="ECO:0000255" key="1">
    <source>
        <dbReference type="HAMAP-Rule" id="MF_01390"/>
    </source>
</evidence>
<sequence>MEEIQRYLQPDRSQQHNFLYPLIFQEYIYALAHDHGLNRNRSILLENPGYNNKLSFLIVKRLITRMYQQNHFLISTNDSNKNSFLGCNKSLYSQMISEGFAFIVEIPFSLRLISSLSSFEGKKIFKSHNLRSIHSTFPFLEDNFSHLNYVLDILIPYPVHLEILVQTLRYWVKDASSLHLLRFFLHEYWNLNSLITSKKPGYSFSKKNQRFFFFLYNSYVYECESTFVFLRNQSSHLRSTSFGALLERIYFYGKIERLVEVFAKDFQVTLWLFKDPFMHYVRYQGKSILASKGTFLLMNKWKFYLVNFWQCHFSLCFHTGRIHINQLSNHSRDFMGYLSSVRLNPSMVRSQMLENSFLINNAIKKFDTLVPIIPLIGSLAKANFCTVLGHPISKPVWSDLSDSDIIDRFGRICRNLFHYYSGSSKKKTLYRIKYILRLSCARTLARKHKSTVRTFLKRSGSELLEEFLTSEEQVLSLTFPRASSSLWGVYRSRIWYLDIFCINDLANYQ</sequence>
<dbReference type="EMBL" id="AB040003">
    <property type="protein sequence ID" value="BAB64854.1"/>
    <property type="molecule type" value="Genomic_DNA"/>
</dbReference>
<dbReference type="GO" id="GO:0009507">
    <property type="term" value="C:chloroplast"/>
    <property type="evidence" value="ECO:0007669"/>
    <property type="project" value="UniProtKB-SubCell"/>
</dbReference>
<dbReference type="GO" id="GO:0003723">
    <property type="term" value="F:RNA binding"/>
    <property type="evidence" value="ECO:0007669"/>
    <property type="project" value="UniProtKB-KW"/>
</dbReference>
<dbReference type="GO" id="GO:0006397">
    <property type="term" value="P:mRNA processing"/>
    <property type="evidence" value="ECO:0007669"/>
    <property type="project" value="UniProtKB-KW"/>
</dbReference>
<dbReference type="GO" id="GO:0008380">
    <property type="term" value="P:RNA splicing"/>
    <property type="evidence" value="ECO:0007669"/>
    <property type="project" value="UniProtKB-UniRule"/>
</dbReference>
<dbReference type="GO" id="GO:0008033">
    <property type="term" value="P:tRNA processing"/>
    <property type="evidence" value="ECO:0007669"/>
    <property type="project" value="UniProtKB-KW"/>
</dbReference>
<dbReference type="HAMAP" id="MF_01390">
    <property type="entry name" value="MatK"/>
    <property type="match status" value="1"/>
</dbReference>
<dbReference type="InterPro" id="IPR024937">
    <property type="entry name" value="Domain_X"/>
</dbReference>
<dbReference type="InterPro" id="IPR002866">
    <property type="entry name" value="Maturase_MatK"/>
</dbReference>
<dbReference type="InterPro" id="IPR024942">
    <property type="entry name" value="Maturase_MatK_N"/>
</dbReference>
<dbReference type="PANTHER" id="PTHR34811">
    <property type="entry name" value="MATURASE K"/>
    <property type="match status" value="1"/>
</dbReference>
<dbReference type="PANTHER" id="PTHR34811:SF1">
    <property type="entry name" value="MATURASE K"/>
    <property type="match status" value="1"/>
</dbReference>
<dbReference type="Pfam" id="PF01348">
    <property type="entry name" value="Intron_maturas2"/>
    <property type="match status" value="1"/>
</dbReference>
<dbReference type="Pfam" id="PF01824">
    <property type="entry name" value="MatK_N"/>
    <property type="match status" value="1"/>
</dbReference>
<comment type="function">
    <text evidence="1">Usually encoded in the trnK tRNA gene intron. Probably assists in splicing its own and other chloroplast group II introns.</text>
</comment>
<comment type="subcellular location">
    <subcellularLocation>
        <location>Plastid</location>
        <location>Chloroplast</location>
    </subcellularLocation>
</comment>
<comment type="similarity">
    <text evidence="1">Belongs to the intron maturase 2 family. MatK subfamily.</text>
</comment>
<proteinExistence type="inferred from homology"/>